<dbReference type="EC" id="7.-.-.-" evidence="1"/>
<dbReference type="EMBL" id="AM933172">
    <property type="protein sequence ID" value="CAR33171.1"/>
    <property type="molecule type" value="Genomic_DNA"/>
</dbReference>
<dbReference type="RefSeq" id="WP_001092600.1">
    <property type="nucleotide sequence ID" value="NC_011294.1"/>
</dbReference>
<dbReference type="SMR" id="B5QV01"/>
<dbReference type="KEGG" id="set:SEN1589"/>
<dbReference type="HOGENOM" id="CLU_063448_2_0_6"/>
<dbReference type="Proteomes" id="UP000000613">
    <property type="component" value="Chromosome"/>
</dbReference>
<dbReference type="GO" id="GO:0005886">
    <property type="term" value="C:plasma membrane"/>
    <property type="evidence" value="ECO:0007669"/>
    <property type="project" value="UniProtKB-SubCell"/>
</dbReference>
<dbReference type="GO" id="GO:0051539">
    <property type="term" value="F:4 iron, 4 sulfur cluster binding"/>
    <property type="evidence" value="ECO:0007669"/>
    <property type="project" value="UniProtKB-UniRule"/>
</dbReference>
<dbReference type="GO" id="GO:0009055">
    <property type="term" value="F:electron transfer activity"/>
    <property type="evidence" value="ECO:0007669"/>
    <property type="project" value="InterPro"/>
</dbReference>
<dbReference type="GO" id="GO:0046872">
    <property type="term" value="F:metal ion binding"/>
    <property type="evidence" value="ECO:0007669"/>
    <property type="project" value="UniProtKB-KW"/>
</dbReference>
<dbReference type="GO" id="GO:0022900">
    <property type="term" value="P:electron transport chain"/>
    <property type="evidence" value="ECO:0007669"/>
    <property type="project" value="UniProtKB-UniRule"/>
</dbReference>
<dbReference type="FunFam" id="1.10.15.40:FF:000001">
    <property type="entry name" value="Ion-translocating oxidoreductase complex subunit B"/>
    <property type="match status" value="1"/>
</dbReference>
<dbReference type="Gene3D" id="3.30.70.20">
    <property type="match status" value="1"/>
</dbReference>
<dbReference type="Gene3D" id="1.10.15.40">
    <property type="entry name" value="Electron transport complex subunit B, putative Fe-S cluster"/>
    <property type="match status" value="1"/>
</dbReference>
<dbReference type="HAMAP" id="MF_00463">
    <property type="entry name" value="RsxB_RnfB"/>
    <property type="match status" value="1"/>
</dbReference>
<dbReference type="InterPro" id="IPR007202">
    <property type="entry name" value="4Fe-4S_dom"/>
</dbReference>
<dbReference type="InterPro" id="IPR017896">
    <property type="entry name" value="4Fe4S_Fe-S-bd"/>
</dbReference>
<dbReference type="InterPro" id="IPR017900">
    <property type="entry name" value="4Fe4S_Fe_S_CS"/>
</dbReference>
<dbReference type="InterPro" id="IPR050395">
    <property type="entry name" value="4Fe4S_Ferredoxin_RnfB"/>
</dbReference>
<dbReference type="InterPro" id="IPR010207">
    <property type="entry name" value="Elect_transpt_cplx_RnfB/RsxB"/>
</dbReference>
<dbReference type="InterPro" id="IPR016463">
    <property type="entry name" value="RnfB/RsxB_Proteobac"/>
</dbReference>
<dbReference type="NCBIfam" id="NF003475">
    <property type="entry name" value="PRK05113.1"/>
    <property type="match status" value="1"/>
</dbReference>
<dbReference type="NCBIfam" id="TIGR01944">
    <property type="entry name" value="rnfB"/>
    <property type="match status" value="1"/>
</dbReference>
<dbReference type="PANTHER" id="PTHR43560">
    <property type="entry name" value="ION-TRANSLOCATING OXIDOREDUCTASE COMPLEX SUBUNIT B"/>
    <property type="match status" value="1"/>
</dbReference>
<dbReference type="PANTHER" id="PTHR43560:SF1">
    <property type="entry name" value="ION-TRANSLOCATING OXIDOREDUCTASE COMPLEX SUBUNIT B"/>
    <property type="match status" value="1"/>
</dbReference>
<dbReference type="Pfam" id="PF14697">
    <property type="entry name" value="Fer4_21"/>
    <property type="match status" value="1"/>
</dbReference>
<dbReference type="Pfam" id="PF04060">
    <property type="entry name" value="FeS"/>
    <property type="match status" value="1"/>
</dbReference>
<dbReference type="PIRSF" id="PIRSF005784">
    <property type="entry name" value="Elect_transpt_RnfB"/>
    <property type="match status" value="1"/>
</dbReference>
<dbReference type="SUPFAM" id="SSF54862">
    <property type="entry name" value="4Fe-4S ferredoxins"/>
    <property type="match status" value="1"/>
</dbReference>
<dbReference type="PROSITE" id="PS51656">
    <property type="entry name" value="4FE4S"/>
    <property type="match status" value="1"/>
</dbReference>
<dbReference type="PROSITE" id="PS00198">
    <property type="entry name" value="4FE4S_FER_1"/>
    <property type="match status" value="2"/>
</dbReference>
<dbReference type="PROSITE" id="PS51379">
    <property type="entry name" value="4FE4S_FER_2"/>
    <property type="match status" value="2"/>
</dbReference>
<comment type="function">
    <text evidence="1">Part of a membrane-bound complex that couples electron transfer with translocation of ions across the membrane. Required to maintain the reduced state of SoxR.</text>
</comment>
<comment type="cofactor">
    <cofactor evidence="1">
        <name>[4Fe-4S] cluster</name>
        <dbReference type="ChEBI" id="CHEBI:49883"/>
    </cofactor>
    <text evidence="1">Binds 3 [4Fe-4S] clusters.</text>
</comment>
<comment type="subunit">
    <text evidence="1">The complex is composed of six subunits: RsxA, RsxB, RsxC, RsxD, RsxE and RsxG.</text>
</comment>
<comment type="subcellular location">
    <subcellularLocation>
        <location evidence="1">Cell inner membrane</location>
    </subcellularLocation>
</comment>
<comment type="similarity">
    <text evidence="1">Belongs to the 4Fe4S bacterial-type ferredoxin family. RnfB subfamily.</text>
</comment>
<evidence type="ECO:0000255" key="1">
    <source>
        <dbReference type="HAMAP-Rule" id="MF_00463"/>
    </source>
</evidence>
<gene>
    <name evidence="1" type="primary">rsxB</name>
    <name type="synonym">rnfB</name>
    <name type="ordered locus">SEN1589</name>
</gene>
<sequence>MNTIWIAVGALTLLGLVFGAILGYASRRFAVEDDPVVEKIDAILPQSQCGQCGYPGCRPYAEAVGLQGEKINRCAPGGEAVMLKMAELLNVEPQPCDGEEQQAAPVRMLAVIDENNCIGCTKCIQACPVDAIVGATRAMHTVMSDLCTGCNLCVDPCPTHCIELRPVNETPDSWKWDLNTIPVRIIPVEQHA</sequence>
<organism>
    <name type="scientific">Salmonella enteritidis PT4 (strain P125109)</name>
    <dbReference type="NCBI Taxonomy" id="550537"/>
    <lineage>
        <taxon>Bacteria</taxon>
        <taxon>Pseudomonadati</taxon>
        <taxon>Pseudomonadota</taxon>
        <taxon>Gammaproteobacteria</taxon>
        <taxon>Enterobacterales</taxon>
        <taxon>Enterobacteriaceae</taxon>
        <taxon>Salmonella</taxon>
    </lineage>
</organism>
<keyword id="KW-0004">4Fe-4S</keyword>
<keyword id="KW-0997">Cell inner membrane</keyword>
<keyword id="KW-1003">Cell membrane</keyword>
<keyword id="KW-0249">Electron transport</keyword>
<keyword id="KW-0408">Iron</keyword>
<keyword id="KW-0411">Iron-sulfur</keyword>
<keyword id="KW-0472">Membrane</keyword>
<keyword id="KW-0479">Metal-binding</keyword>
<keyword id="KW-0677">Repeat</keyword>
<keyword id="KW-1278">Translocase</keyword>
<keyword id="KW-0813">Transport</keyword>
<protein>
    <recommendedName>
        <fullName evidence="1">Ion-translocating oxidoreductase complex subunit B</fullName>
        <ecNumber evidence="1">7.-.-.-</ecNumber>
    </recommendedName>
    <alternativeName>
        <fullName evidence="1">Rsx electron transport complex subunit B</fullName>
    </alternativeName>
</protein>
<name>RSXB_SALEP</name>
<accession>B5QV01</accession>
<proteinExistence type="inferred from homology"/>
<reference key="1">
    <citation type="journal article" date="2008" name="Genome Res.">
        <title>Comparative genome analysis of Salmonella enteritidis PT4 and Salmonella gallinarum 287/91 provides insights into evolutionary and host adaptation pathways.</title>
        <authorList>
            <person name="Thomson N.R."/>
            <person name="Clayton D.J."/>
            <person name="Windhorst D."/>
            <person name="Vernikos G."/>
            <person name="Davidson S."/>
            <person name="Churcher C."/>
            <person name="Quail M.A."/>
            <person name="Stevens M."/>
            <person name="Jones M.A."/>
            <person name="Watson M."/>
            <person name="Barron A."/>
            <person name="Layton A."/>
            <person name="Pickard D."/>
            <person name="Kingsley R.A."/>
            <person name="Bignell A."/>
            <person name="Clark L."/>
            <person name="Harris B."/>
            <person name="Ormond D."/>
            <person name="Abdellah Z."/>
            <person name="Brooks K."/>
            <person name="Cherevach I."/>
            <person name="Chillingworth T."/>
            <person name="Woodward J."/>
            <person name="Norberczak H."/>
            <person name="Lord A."/>
            <person name="Arrowsmith C."/>
            <person name="Jagels K."/>
            <person name="Moule S."/>
            <person name="Mungall K."/>
            <person name="Saunders M."/>
            <person name="Whitehead S."/>
            <person name="Chabalgoity J.A."/>
            <person name="Maskell D."/>
            <person name="Humphreys T."/>
            <person name="Roberts M."/>
            <person name="Barrow P.A."/>
            <person name="Dougan G."/>
            <person name="Parkhill J."/>
        </authorList>
    </citation>
    <scope>NUCLEOTIDE SEQUENCE [LARGE SCALE GENOMIC DNA]</scope>
    <source>
        <strain>P125109</strain>
    </source>
</reference>
<feature type="chain" id="PRO_1000194493" description="Ion-translocating oxidoreductase complex subunit B">
    <location>
        <begin position="1"/>
        <end position="192"/>
    </location>
</feature>
<feature type="domain" description="4Fe-4S" evidence="1">
    <location>
        <begin position="32"/>
        <end position="91"/>
    </location>
</feature>
<feature type="domain" description="4Fe-4S ferredoxin-type 1" evidence="1">
    <location>
        <begin position="108"/>
        <end position="137"/>
    </location>
</feature>
<feature type="domain" description="4Fe-4S ferredoxin-type 2" evidence="1">
    <location>
        <begin position="138"/>
        <end position="167"/>
    </location>
</feature>
<feature type="region of interest" description="Hydrophobic" evidence="1">
    <location>
        <begin position="1"/>
        <end position="26"/>
    </location>
</feature>
<feature type="binding site" evidence="1">
    <location>
        <position position="49"/>
    </location>
    <ligand>
        <name>[4Fe-4S] cluster</name>
        <dbReference type="ChEBI" id="CHEBI:49883"/>
        <label>1</label>
    </ligand>
</feature>
<feature type="binding site" evidence="1">
    <location>
        <position position="52"/>
    </location>
    <ligand>
        <name>[4Fe-4S] cluster</name>
        <dbReference type="ChEBI" id="CHEBI:49883"/>
        <label>1</label>
    </ligand>
</feature>
<feature type="binding site" evidence="1">
    <location>
        <position position="57"/>
    </location>
    <ligand>
        <name>[4Fe-4S] cluster</name>
        <dbReference type="ChEBI" id="CHEBI:49883"/>
        <label>1</label>
    </ligand>
</feature>
<feature type="binding site" evidence="1">
    <location>
        <position position="74"/>
    </location>
    <ligand>
        <name>[4Fe-4S] cluster</name>
        <dbReference type="ChEBI" id="CHEBI:49883"/>
        <label>1</label>
    </ligand>
</feature>
<feature type="binding site" evidence="1">
    <location>
        <position position="117"/>
    </location>
    <ligand>
        <name>[4Fe-4S] cluster</name>
        <dbReference type="ChEBI" id="CHEBI:49883"/>
        <label>2</label>
    </ligand>
</feature>
<feature type="binding site" evidence="1">
    <location>
        <position position="120"/>
    </location>
    <ligand>
        <name>[4Fe-4S] cluster</name>
        <dbReference type="ChEBI" id="CHEBI:49883"/>
        <label>2</label>
    </ligand>
</feature>
<feature type="binding site" evidence="1">
    <location>
        <position position="123"/>
    </location>
    <ligand>
        <name>[4Fe-4S] cluster</name>
        <dbReference type="ChEBI" id="CHEBI:49883"/>
        <label>2</label>
    </ligand>
</feature>
<feature type="binding site" evidence="1">
    <location>
        <position position="127"/>
    </location>
    <ligand>
        <name>[4Fe-4S] cluster</name>
        <dbReference type="ChEBI" id="CHEBI:49883"/>
        <label>3</label>
    </ligand>
</feature>
<feature type="binding site" evidence="1">
    <location>
        <position position="147"/>
    </location>
    <ligand>
        <name>[4Fe-4S] cluster</name>
        <dbReference type="ChEBI" id="CHEBI:49883"/>
        <label>3</label>
    </ligand>
</feature>
<feature type="binding site" evidence="1">
    <location>
        <position position="150"/>
    </location>
    <ligand>
        <name>[4Fe-4S] cluster</name>
        <dbReference type="ChEBI" id="CHEBI:49883"/>
        <label>3</label>
    </ligand>
</feature>
<feature type="binding site" evidence="1">
    <location>
        <position position="153"/>
    </location>
    <ligand>
        <name>[4Fe-4S] cluster</name>
        <dbReference type="ChEBI" id="CHEBI:49883"/>
        <label>3</label>
    </ligand>
</feature>
<feature type="binding site" evidence="1">
    <location>
        <position position="157"/>
    </location>
    <ligand>
        <name>[4Fe-4S] cluster</name>
        <dbReference type="ChEBI" id="CHEBI:49883"/>
        <label>2</label>
    </ligand>
</feature>